<gene>
    <name type="primary">nad5</name>
</gene>
<dbReference type="EC" id="7.1.1.2"/>
<dbReference type="EMBL" id="DQ336395">
    <property type="protein sequence ID" value="ABC60397.1"/>
    <property type="molecule type" value="Genomic_DNA"/>
</dbReference>
<dbReference type="RefSeq" id="YP_492646.1">
    <property type="nucleotide sequence ID" value="NC_007787.2"/>
</dbReference>
<dbReference type="SMR" id="Q2LCP6"/>
<dbReference type="GeneID" id="3912634"/>
<dbReference type="GO" id="GO:0005743">
    <property type="term" value="C:mitochondrial inner membrane"/>
    <property type="evidence" value="ECO:0007669"/>
    <property type="project" value="UniProtKB-SubCell"/>
</dbReference>
<dbReference type="GO" id="GO:0008137">
    <property type="term" value="F:NADH dehydrogenase (ubiquinone) activity"/>
    <property type="evidence" value="ECO:0007669"/>
    <property type="project" value="UniProtKB-EC"/>
</dbReference>
<dbReference type="GO" id="GO:0042773">
    <property type="term" value="P:ATP synthesis coupled electron transport"/>
    <property type="evidence" value="ECO:0007669"/>
    <property type="project" value="InterPro"/>
</dbReference>
<dbReference type="GO" id="GO:0015990">
    <property type="term" value="P:electron transport coupled proton transport"/>
    <property type="evidence" value="ECO:0007669"/>
    <property type="project" value="TreeGrafter"/>
</dbReference>
<dbReference type="InterPro" id="IPR010934">
    <property type="entry name" value="NADH_DH_su5_C"/>
</dbReference>
<dbReference type="InterPro" id="IPR018393">
    <property type="entry name" value="NADHpl_OxRdtase_5_subgr"/>
</dbReference>
<dbReference type="InterPro" id="IPR001750">
    <property type="entry name" value="ND/Mrp_TM"/>
</dbReference>
<dbReference type="InterPro" id="IPR003945">
    <property type="entry name" value="NU5C-like"/>
</dbReference>
<dbReference type="InterPro" id="IPR001516">
    <property type="entry name" value="Proton_antipo_N"/>
</dbReference>
<dbReference type="NCBIfam" id="TIGR01974">
    <property type="entry name" value="NDH_I_L"/>
    <property type="match status" value="1"/>
</dbReference>
<dbReference type="NCBIfam" id="NF005141">
    <property type="entry name" value="PRK06590.1"/>
    <property type="match status" value="1"/>
</dbReference>
<dbReference type="PANTHER" id="PTHR42829">
    <property type="entry name" value="NADH-UBIQUINONE OXIDOREDUCTASE CHAIN 5"/>
    <property type="match status" value="1"/>
</dbReference>
<dbReference type="PANTHER" id="PTHR42829:SF2">
    <property type="entry name" value="NADH-UBIQUINONE OXIDOREDUCTASE CHAIN 5"/>
    <property type="match status" value="1"/>
</dbReference>
<dbReference type="Pfam" id="PF06455">
    <property type="entry name" value="NADH5_C"/>
    <property type="match status" value="1"/>
</dbReference>
<dbReference type="Pfam" id="PF00361">
    <property type="entry name" value="Proton_antipo_M"/>
    <property type="match status" value="1"/>
</dbReference>
<dbReference type="Pfam" id="PF00662">
    <property type="entry name" value="Proton_antipo_N"/>
    <property type="match status" value="1"/>
</dbReference>
<dbReference type="PRINTS" id="PR01434">
    <property type="entry name" value="NADHDHGNASE5"/>
</dbReference>
<dbReference type="PRINTS" id="PR01435">
    <property type="entry name" value="NPOXDRDTASE5"/>
</dbReference>
<keyword id="KW-0249">Electron transport</keyword>
<keyword id="KW-0472">Membrane</keyword>
<keyword id="KW-0496">Mitochondrion</keyword>
<keyword id="KW-0999">Mitochondrion inner membrane</keyword>
<keyword id="KW-0520">NAD</keyword>
<keyword id="KW-0679">Respiratory chain</keyword>
<keyword id="KW-1278">Translocase</keyword>
<keyword id="KW-0812">Transmembrane</keyword>
<keyword id="KW-1133">Transmembrane helix</keyword>
<keyword id="KW-0813">Transport</keyword>
<keyword id="KW-0830">Ubiquinone</keyword>
<name>NU5M_DICCI</name>
<feature type="chain" id="PRO_0000312416" description="NADH-ubiquinone oxidoreductase chain 5">
    <location>
        <begin position="1"/>
        <end position="668"/>
    </location>
</feature>
<feature type="transmembrane region" description="Helical" evidence="2">
    <location>
        <begin position="1"/>
        <end position="21"/>
    </location>
</feature>
<feature type="transmembrane region" description="Helical" evidence="2">
    <location>
        <begin position="31"/>
        <end position="51"/>
    </location>
</feature>
<feature type="transmembrane region" description="Helical" evidence="2">
    <location>
        <begin position="81"/>
        <end position="101"/>
    </location>
</feature>
<feature type="transmembrane region" description="Helical" evidence="2">
    <location>
        <begin position="111"/>
        <end position="131"/>
    </location>
</feature>
<feature type="transmembrane region" description="Helical" evidence="2">
    <location>
        <begin position="133"/>
        <end position="153"/>
    </location>
</feature>
<feature type="transmembrane region" description="Helical" evidence="2">
    <location>
        <begin position="178"/>
        <end position="198"/>
    </location>
</feature>
<feature type="transmembrane region" description="Helical" evidence="2">
    <location>
        <begin position="211"/>
        <end position="231"/>
    </location>
</feature>
<feature type="transmembrane region" description="Helical" evidence="2">
    <location>
        <begin position="251"/>
        <end position="271"/>
    </location>
</feature>
<feature type="transmembrane region" description="Helical" evidence="2">
    <location>
        <begin position="283"/>
        <end position="303"/>
    </location>
</feature>
<feature type="transmembrane region" description="Helical" evidence="2">
    <location>
        <begin position="311"/>
        <end position="331"/>
    </location>
</feature>
<feature type="transmembrane region" description="Helical" evidence="2">
    <location>
        <begin position="339"/>
        <end position="359"/>
    </location>
</feature>
<feature type="transmembrane region" description="Helical" evidence="2">
    <location>
        <begin position="375"/>
        <end position="395"/>
    </location>
</feature>
<feature type="transmembrane region" description="Helical" evidence="2">
    <location>
        <begin position="421"/>
        <end position="441"/>
    </location>
</feature>
<feature type="transmembrane region" description="Helical" evidence="2">
    <location>
        <begin position="462"/>
        <end position="482"/>
    </location>
</feature>
<feature type="transmembrane region" description="Helical" evidence="2">
    <location>
        <begin position="519"/>
        <end position="539"/>
    </location>
</feature>
<feature type="transmembrane region" description="Helical" evidence="2">
    <location>
        <begin position="566"/>
        <end position="586"/>
    </location>
</feature>
<feature type="transmembrane region" description="Helical" evidence="2">
    <location>
        <begin position="629"/>
        <end position="649"/>
    </location>
</feature>
<feature type="transmembrane region" description="Helical" evidence="2">
    <location>
        <begin position="650"/>
        <end position="668"/>
    </location>
</feature>
<evidence type="ECO:0000250" key="1"/>
<evidence type="ECO:0000255" key="2"/>
<evidence type="ECO:0000305" key="3"/>
<organism>
    <name type="scientific">Dictyostelium citrinum</name>
    <name type="common">Slime mold</name>
    <dbReference type="NCBI Taxonomy" id="361072"/>
    <lineage>
        <taxon>Eukaryota</taxon>
        <taxon>Amoebozoa</taxon>
        <taxon>Evosea</taxon>
        <taxon>Eumycetozoa</taxon>
        <taxon>Dictyostelia</taxon>
        <taxon>Dictyosteliales</taxon>
        <taxon>Dictyosteliaceae</taxon>
        <taxon>Dictyostelium</taxon>
    </lineage>
</organism>
<accession>Q2LCP6</accession>
<comment type="function">
    <text evidence="1">Core subunit of the mitochondrial membrane respiratory chain NADH dehydrogenase (Complex I) that is believed to belong to the minimal assembly required for catalysis. Complex I functions in the transfer of electrons from NADH to the respiratory chain. The immediate electron acceptor for the enzyme is believed to be ubiquinone (By similarity).</text>
</comment>
<comment type="catalytic activity">
    <reaction>
        <text>a ubiquinone + NADH + 5 H(+)(in) = a ubiquinol + NAD(+) + 4 H(+)(out)</text>
        <dbReference type="Rhea" id="RHEA:29091"/>
        <dbReference type="Rhea" id="RHEA-COMP:9565"/>
        <dbReference type="Rhea" id="RHEA-COMP:9566"/>
        <dbReference type="ChEBI" id="CHEBI:15378"/>
        <dbReference type="ChEBI" id="CHEBI:16389"/>
        <dbReference type="ChEBI" id="CHEBI:17976"/>
        <dbReference type="ChEBI" id="CHEBI:57540"/>
        <dbReference type="ChEBI" id="CHEBI:57945"/>
        <dbReference type="EC" id="7.1.1.2"/>
    </reaction>
</comment>
<comment type="subcellular location">
    <subcellularLocation>
        <location evidence="1">Mitochondrion inner membrane</location>
        <topology evidence="1">Multi-pass membrane protein</topology>
    </subcellularLocation>
</comment>
<comment type="similarity">
    <text evidence="3">Belongs to the complex I subunit 5 family.</text>
</comment>
<reference key="1">
    <citation type="journal article" date="2008" name="Mol. Biol. Evol.">
        <title>Mitochondrial genome evolution in the social amoebae.</title>
        <authorList>
            <person name="Heidel A.J."/>
            <person name="Gloeckner G."/>
        </authorList>
    </citation>
    <scope>NUCLEOTIDE SEQUENCE [LARGE SCALE GENOMIC DNA]</scope>
</reference>
<geneLocation type="mitochondrion"/>
<proteinExistence type="inferred from homology"/>
<sequence>MYIINLILPLIGSIITGLFGHKLGNKLSIQIAVGCMMLTALSSLYIGYEILLCNSVVHFKLSTWMQVGSLNVEYGLLYDSLTSIMIIVITCISSMVHLYSMDYMKADPHKTRFFSYLSLFTFFMMLLVTADNFVQLFFGWEGVGIMSYLLINFWYTRLQANKSALKAVILNRFGDFGLFFGILLVFLVFKSVDFSVIFTVAPFITEYTINLLGYEVNAITLIGSFIVIGVVGKSAQLGLHMWLPDAMEGPTPVSALLHAATMVTAGVFLVLRTSPLLSYSITILNILTIIGALTTLFATTIGIVQNDIKRVIAYSTCSQLGYMIFACGLLNYNASIYHLTTHAFFKALLFLSAGSVIHGLNDEQDMRKMGGLVNLMPLTYQCMLIGTLALTGFPFLSGYYSKDIILETSYATYYWEGTFAAIIGYVAAFGTTFYSFRLLILTFFNKPRMQYKTIAGVHEASTNMVIPLVILAICSIFIGYLTKDLFVGLGTPIWNNSFFAYPYNNLILESEVLQRELKLLPLFAFIYGVLTPVLFYFNLKEDRMVHLIKNPIAKESYFFFVKKWYFDFLSRVLIAVPFFHLSYDVMNKDLDKGLWEQIGVTGVATALVNEFTEFKLNNEITLSTYISYIVQAILLIIFVGIFSFMIGFLYVELFVILGALYLCLPKIK</sequence>
<protein>
    <recommendedName>
        <fullName>NADH-ubiquinone oxidoreductase chain 5</fullName>
        <ecNumber>7.1.1.2</ecNumber>
    </recommendedName>
    <alternativeName>
        <fullName>NADH dehydrogenase subunit 5</fullName>
    </alternativeName>
</protein>